<accession>Q56273</accession>
<evidence type="ECO:0000255" key="1">
    <source>
        <dbReference type="HAMAP-Rule" id="MF_00036"/>
    </source>
</evidence>
<name>SYA_ACIFI</name>
<proteinExistence type="inferred from homology"/>
<gene>
    <name evidence="1" type="primary">alaS</name>
</gene>
<reference key="1">
    <citation type="journal article" date="1997" name="Microbiology">
        <title>Alanyl-tRNA synthetase gene of the extreme acidophilic chemolithoautotrophic Thiobacillus ferrooxidans is highly homologous to alaS genes from all living kingdoms but cannot be transcribed from its promoter in Escherichia coli.</title>
        <authorList>
            <person name="Guiliani N."/>
            <person name="Bengrine A."/>
            <person name="Borne F."/>
            <person name="Chippaux M."/>
            <person name="Bonnefoy V."/>
        </authorList>
    </citation>
    <scope>NUCLEOTIDE SEQUENCE [GENOMIC DNA]</scope>
    <source>
        <strain>ATCC 33020 / DSM 29468 / JCM 18981 / 11Fe</strain>
    </source>
</reference>
<sequence length="877" mass="95367">MQAQAIRQAFLEYFVEQGHQIVPSSPLIPRNDPTLLFTNAGMVPFKDVFLGLETRPYRRAVSSQRCMRAGGKHNDLENVGYTARHHTFFEMLGNFSFGDYFKREVIGFAWRFLTERLGLPPEKLWITVYEEDDEAADIWMNEIGVDPARLSRCGEKDNFWSMGDTGPCGPCSEIFYDHGPHIPGGPPGSPEEDGDRYIEIWNLVFMQFDRDSSGTLTPLPKPSVDTGMGLERLAAVLQGVHNNYDTDLFKPLIAAAAAISGKTYGSDAATDISLRVLADHIRACSFLITDGVLPANEGRGYVLRRIIRRAVRHGRKLGMETVFFHQLVAPLVAEMGSAFPELTRAQREVERALEREETRFRETLERGLSLLEEAIADLAAGAAIPGEIIFRLADTFGFPVDLTADIARERDLIMDMEGYEAAMADERSPLPCRLGGSGEVKTERVYHDLAMRLPVTEFTGYSTCADEGKVVALIRDGEEVAFLEAGDMGVVILDRTPFYGESGGQAGDRGELQSNDALFAVTDTQKPMGHLHVHLGRVESGRLQIGDMVVASVDEVARRATAAHHSATHLLHAALRNILGSHVQQKGSLVNPERLRFDFSHPEPVTAAQLREIERVVNAAIRNNVGAETRILPVAEAQALGAMALFGEKYGDEVRVVRMGDFSMELCGGTHVEALGDIGVFKILSESGVAAGIRRIEAVTGAVALEAIQRDEERLQAAAGLLKVAPAELDQRLAQTLERLRQLEKELEKVKRDEAVRAGAGLAAEAEDVGGVPVLIRRLEGMDGKALRDALDRLRSQLPDGVIVLAGVEREKVALIAGVGKGLTGRVHAGELVNTVAQPLGGKGGGRPELAQAGAGNPAALDAALNAARDWVKGKLG</sequence>
<feature type="chain" id="PRO_0000075235" description="Alanine--tRNA ligase">
    <location>
        <begin position="1"/>
        <end position="877"/>
    </location>
</feature>
<feature type="binding site" evidence="1">
    <location>
        <position position="565"/>
    </location>
    <ligand>
        <name>Zn(2+)</name>
        <dbReference type="ChEBI" id="CHEBI:29105"/>
    </ligand>
</feature>
<feature type="binding site" evidence="1">
    <location>
        <position position="569"/>
    </location>
    <ligand>
        <name>Zn(2+)</name>
        <dbReference type="ChEBI" id="CHEBI:29105"/>
    </ligand>
</feature>
<feature type="binding site" evidence="1">
    <location>
        <position position="667"/>
    </location>
    <ligand>
        <name>Zn(2+)</name>
        <dbReference type="ChEBI" id="CHEBI:29105"/>
    </ligand>
</feature>
<feature type="binding site" evidence="1">
    <location>
        <position position="671"/>
    </location>
    <ligand>
        <name>Zn(2+)</name>
        <dbReference type="ChEBI" id="CHEBI:29105"/>
    </ligand>
</feature>
<keyword id="KW-0030">Aminoacyl-tRNA synthetase</keyword>
<keyword id="KW-0067">ATP-binding</keyword>
<keyword id="KW-0963">Cytoplasm</keyword>
<keyword id="KW-0436">Ligase</keyword>
<keyword id="KW-0479">Metal-binding</keyword>
<keyword id="KW-0547">Nucleotide-binding</keyword>
<keyword id="KW-0648">Protein biosynthesis</keyword>
<keyword id="KW-0694">RNA-binding</keyword>
<keyword id="KW-0820">tRNA-binding</keyword>
<keyword id="KW-0862">Zinc</keyword>
<organism>
    <name type="scientific">Acidithiobacillus ferridurans</name>
    <dbReference type="NCBI Taxonomy" id="1232575"/>
    <lineage>
        <taxon>Bacteria</taxon>
        <taxon>Pseudomonadati</taxon>
        <taxon>Pseudomonadota</taxon>
        <taxon>Acidithiobacillia</taxon>
        <taxon>Acidithiobacillales</taxon>
        <taxon>Acidithiobacillaceae</taxon>
        <taxon>Acidithiobacillus</taxon>
    </lineage>
</organism>
<dbReference type="EC" id="6.1.1.7" evidence="1"/>
<dbReference type="EMBL" id="X95571">
    <property type="protein sequence ID" value="CAA64818.1"/>
    <property type="molecule type" value="Genomic_DNA"/>
</dbReference>
<dbReference type="SMR" id="Q56273"/>
<dbReference type="GO" id="GO:0005829">
    <property type="term" value="C:cytosol"/>
    <property type="evidence" value="ECO:0007669"/>
    <property type="project" value="TreeGrafter"/>
</dbReference>
<dbReference type="GO" id="GO:0004813">
    <property type="term" value="F:alanine-tRNA ligase activity"/>
    <property type="evidence" value="ECO:0007669"/>
    <property type="project" value="UniProtKB-UniRule"/>
</dbReference>
<dbReference type="GO" id="GO:0002161">
    <property type="term" value="F:aminoacyl-tRNA deacylase activity"/>
    <property type="evidence" value="ECO:0007669"/>
    <property type="project" value="TreeGrafter"/>
</dbReference>
<dbReference type="GO" id="GO:0005524">
    <property type="term" value="F:ATP binding"/>
    <property type="evidence" value="ECO:0007669"/>
    <property type="project" value="UniProtKB-UniRule"/>
</dbReference>
<dbReference type="GO" id="GO:0000049">
    <property type="term" value="F:tRNA binding"/>
    <property type="evidence" value="ECO:0007669"/>
    <property type="project" value="UniProtKB-KW"/>
</dbReference>
<dbReference type="GO" id="GO:0008270">
    <property type="term" value="F:zinc ion binding"/>
    <property type="evidence" value="ECO:0007669"/>
    <property type="project" value="UniProtKB-UniRule"/>
</dbReference>
<dbReference type="GO" id="GO:0006419">
    <property type="term" value="P:alanyl-tRNA aminoacylation"/>
    <property type="evidence" value="ECO:0007669"/>
    <property type="project" value="UniProtKB-UniRule"/>
</dbReference>
<dbReference type="GO" id="GO:0045892">
    <property type="term" value="P:negative regulation of DNA-templated transcription"/>
    <property type="evidence" value="ECO:0007669"/>
    <property type="project" value="TreeGrafter"/>
</dbReference>
<dbReference type="CDD" id="cd00673">
    <property type="entry name" value="AlaRS_core"/>
    <property type="match status" value="1"/>
</dbReference>
<dbReference type="FunFam" id="2.40.30.130:FF:000001">
    <property type="entry name" value="Alanine--tRNA ligase"/>
    <property type="match status" value="1"/>
</dbReference>
<dbReference type="FunFam" id="3.10.310.40:FF:000001">
    <property type="entry name" value="Alanine--tRNA ligase"/>
    <property type="match status" value="1"/>
</dbReference>
<dbReference type="FunFam" id="3.30.54.20:FF:000001">
    <property type="entry name" value="Alanine--tRNA ligase"/>
    <property type="match status" value="1"/>
</dbReference>
<dbReference type="FunFam" id="3.30.930.10:FF:000004">
    <property type="entry name" value="Alanine--tRNA ligase"/>
    <property type="match status" value="1"/>
</dbReference>
<dbReference type="FunFam" id="3.30.980.10:FF:000004">
    <property type="entry name" value="Alanine--tRNA ligase, cytoplasmic"/>
    <property type="match status" value="1"/>
</dbReference>
<dbReference type="Gene3D" id="2.40.30.130">
    <property type="match status" value="1"/>
</dbReference>
<dbReference type="Gene3D" id="3.10.310.40">
    <property type="match status" value="1"/>
</dbReference>
<dbReference type="Gene3D" id="3.30.54.20">
    <property type="match status" value="1"/>
</dbReference>
<dbReference type="Gene3D" id="6.10.250.550">
    <property type="match status" value="1"/>
</dbReference>
<dbReference type="Gene3D" id="3.30.930.10">
    <property type="entry name" value="Bira Bifunctional Protein, Domain 2"/>
    <property type="match status" value="1"/>
</dbReference>
<dbReference type="Gene3D" id="3.30.980.10">
    <property type="entry name" value="Threonyl-trna Synthetase, Chain A, domain 2"/>
    <property type="match status" value="1"/>
</dbReference>
<dbReference type="HAMAP" id="MF_00036_B">
    <property type="entry name" value="Ala_tRNA_synth_B"/>
    <property type="match status" value="1"/>
</dbReference>
<dbReference type="InterPro" id="IPR045864">
    <property type="entry name" value="aa-tRNA-synth_II/BPL/LPL"/>
</dbReference>
<dbReference type="InterPro" id="IPR002318">
    <property type="entry name" value="Ala-tRNA-lgiase_IIc"/>
</dbReference>
<dbReference type="InterPro" id="IPR018162">
    <property type="entry name" value="Ala-tRNA-ligase_IIc_anticod-bd"/>
</dbReference>
<dbReference type="InterPro" id="IPR018165">
    <property type="entry name" value="Ala-tRNA-synth_IIc_core"/>
</dbReference>
<dbReference type="InterPro" id="IPR018164">
    <property type="entry name" value="Ala-tRNA-synth_IIc_N"/>
</dbReference>
<dbReference type="InterPro" id="IPR050058">
    <property type="entry name" value="Ala-tRNA_ligase"/>
</dbReference>
<dbReference type="InterPro" id="IPR023033">
    <property type="entry name" value="Ala_tRNA_ligase_euk/bac"/>
</dbReference>
<dbReference type="InterPro" id="IPR003156">
    <property type="entry name" value="DHHA1_dom"/>
</dbReference>
<dbReference type="InterPro" id="IPR018163">
    <property type="entry name" value="Thr/Ala-tRNA-synth_IIc_edit"/>
</dbReference>
<dbReference type="InterPro" id="IPR009000">
    <property type="entry name" value="Transl_B-barrel_sf"/>
</dbReference>
<dbReference type="InterPro" id="IPR012947">
    <property type="entry name" value="tRNA_SAD"/>
</dbReference>
<dbReference type="NCBIfam" id="TIGR00344">
    <property type="entry name" value="alaS"/>
    <property type="match status" value="1"/>
</dbReference>
<dbReference type="PANTHER" id="PTHR11777:SF9">
    <property type="entry name" value="ALANINE--TRNA LIGASE, CYTOPLASMIC"/>
    <property type="match status" value="1"/>
</dbReference>
<dbReference type="PANTHER" id="PTHR11777">
    <property type="entry name" value="ALANYL-TRNA SYNTHETASE"/>
    <property type="match status" value="1"/>
</dbReference>
<dbReference type="Pfam" id="PF02272">
    <property type="entry name" value="DHHA1"/>
    <property type="match status" value="1"/>
</dbReference>
<dbReference type="Pfam" id="PF01411">
    <property type="entry name" value="tRNA-synt_2c"/>
    <property type="match status" value="1"/>
</dbReference>
<dbReference type="Pfam" id="PF07973">
    <property type="entry name" value="tRNA_SAD"/>
    <property type="match status" value="1"/>
</dbReference>
<dbReference type="PRINTS" id="PR00980">
    <property type="entry name" value="TRNASYNTHALA"/>
</dbReference>
<dbReference type="SMART" id="SM00863">
    <property type="entry name" value="tRNA_SAD"/>
    <property type="match status" value="1"/>
</dbReference>
<dbReference type="SUPFAM" id="SSF55681">
    <property type="entry name" value="Class II aaRS and biotin synthetases"/>
    <property type="match status" value="1"/>
</dbReference>
<dbReference type="SUPFAM" id="SSF101353">
    <property type="entry name" value="Putative anticodon-binding domain of alanyl-tRNA synthetase (AlaRS)"/>
    <property type="match status" value="1"/>
</dbReference>
<dbReference type="SUPFAM" id="SSF55186">
    <property type="entry name" value="ThrRS/AlaRS common domain"/>
    <property type="match status" value="1"/>
</dbReference>
<dbReference type="SUPFAM" id="SSF50447">
    <property type="entry name" value="Translation proteins"/>
    <property type="match status" value="1"/>
</dbReference>
<dbReference type="PROSITE" id="PS50860">
    <property type="entry name" value="AA_TRNA_LIGASE_II_ALA"/>
    <property type="match status" value="1"/>
</dbReference>
<protein>
    <recommendedName>
        <fullName evidence="1">Alanine--tRNA ligase</fullName>
        <ecNumber evidence="1">6.1.1.7</ecNumber>
    </recommendedName>
    <alternativeName>
        <fullName evidence="1">Alanyl-tRNA synthetase</fullName>
        <shortName evidence="1">AlaRS</shortName>
    </alternativeName>
</protein>
<comment type="function">
    <text evidence="1">Catalyzes the attachment of alanine to tRNA(Ala) in a two-step reaction: alanine is first activated by ATP to form Ala-AMP and then transferred to the acceptor end of tRNA(Ala). Also edits incorrectly charged Ser-tRNA(Ala) and Gly-tRNA(Ala) via its editing domain.</text>
</comment>
<comment type="catalytic activity">
    <reaction evidence="1">
        <text>tRNA(Ala) + L-alanine + ATP = L-alanyl-tRNA(Ala) + AMP + diphosphate</text>
        <dbReference type="Rhea" id="RHEA:12540"/>
        <dbReference type="Rhea" id="RHEA-COMP:9657"/>
        <dbReference type="Rhea" id="RHEA-COMP:9923"/>
        <dbReference type="ChEBI" id="CHEBI:30616"/>
        <dbReference type="ChEBI" id="CHEBI:33019"/>
        <dbReference type="ChEBI" id="CHEBI:57972"/>
        <dbReference type="ChEBI" id="CHEBI:78442"/>
        <dbReference type="ChEBI" id="CHEBI:78497"/>
        <dbReference type="ChEBI" id="CHEBI:456215"/>
        <dbReference type="EC" id="6.1.1.7"/>
    </reaction>
</comment>
<comment type="cofactor">
    <cofactor evidence="1">
        <name>Zn(2+)</name>
        <dbReference type="ChEBI" id="CHEBI:29105"/>
    </cofactor>
    <text evidence="1">Binds 1 zinc ion per subunit.</text>
</comment>
<comment type="subcellular location">
    <subcellularLocation>
        <location evidence="1">Cytoplasm</location>
    </subcellularLocation>
</comment>
<comment type="domain">
    <text evidence="1">Consists of three domains; the N-terminal catalytic domain, the editing domain and the C-terminal C-Ala domain. The editing domain removes incorrectly charged amino acids, while the C-Ala domain, along with tRNA(Ala), serves as a bridge to cooperatively bring together the editing and aminoacylation centers thus stimulating deacylation of misacylated tRNAs.</text>
</comment>
<comment type="similarity">
    <text evidence="1">Belongs to the class-II aminoacyl-tRNA synthetase family.</text>
</comment>